<keyword id="KW-0963">Cytoplasm</keyword>
<keyword id="KW-0456">Lyase</keyword>
<keyword id="KW-0585">Phenylalanine catabolism</keyword>
<keyword id="KW-0587">Phenylpropanoid metabolism</keyword>
<accession>P52777</accession>
<name>PALY_PINTA</name>
<dbReference type="EC" id="4.3.1.24" evidence="2"/>
<dbReference type="EMBL" id="U39792">
    <property type="protein sequence ID" value="AAA84889.1"/>
    <property type="molecule type" value="Genomic_DNA"/>
</dbReference>
<dbReference type="PIR" id="T09777">
    <property type="entry name" value="T09777"/>
</dbReference>
<dbReference type="SMR" id="P52777"/>
<dbReference type="BRENDA" id="4.3.1.24">
    <property type="organism ID" value="4861"/>
</dbReference>
<dbReference type="UniPathway" id="UPA00713">
    <property type="reaction ID" value="UER00725"/>
</dbReference>
<dbReference type="GO" id="GO:0005737">
    <property type="term" value="C:cytoplasm"/>
    <property type="evidence" value="ECO:0007669"/>
    <property type="project" value="UniProtKB-SubCell"/>
</dbReference>
<dbReference type="GO" id="GO:0045548">
    <property type="term" value="F:phenylalanine ammonia-lyase activity"/>
    <property type="evidence" value="ECO:0007669"/>
    <property type="project" value="UniProtKB-EC"/>
</dbReference>
<dbReference type="GO" id="GO:0009800">
    <property type="term" value="P:cinnamic acid biosynthetic process"/>
    <property type="evidence" value="ECO:0007669"/>
    <property type="project" value="UniProtKB-UniPathway"/>
</dbReference>
<dbReference type="GO" id="GO:0006559">
    <property type="term" value="P:L-phenylalanine catabolic process"/>
    <property type="evidence" value="ECO:0007669"/>
    <property type="project" value="UniProtKB-KW"/>
</dbReference>
<dbReference type="CDD" id="cd00332">
    <property type="entry name" value="PAL-HAL"/>
    <property type="match status" value="1"/>
</dbReference>
<dbReference type="FunFam" id="1.10.275.10:FF:000009">
    <property type="entry name" value="Phenylalanine ammonia-lyase"/>
    <property type="match status" value="1"/>
</dbReference>
<dbReference type="Gene3D" id="1.20.200.10">
    <property type="entry name" value="Fumarase/aspartase (Central domain)"/>
    <property type="match status" value="1"/>
</dbReference>
<dbReference type="Gene3D" id="1.10.275.10">
    <property type="entry name" value="Fumarase/aspartase (N-terminal domain)"/>
    <property type="match status" value="1"/>
</dbReference>
<dbReference type="Gene3D" id="1.10.274.20">
    <property type="entry name" value="Phenylalanine ammonia-lyase 1, domain 3"/>
    <property type="match status" value="1"/>
</dbReference>
<dbReference type="InterPro" id="IPR001106">
    <property type="entry name" value="Aromatic_Lyase"/>
</dbReference>
<dbReference type="InterPro" id="IPR024083">
    <property type="entry name" value="Fumarase/histidase_N"/>
</dbReference>
<dbReference type="InterPro" id="IPR008948">
    <property type="entry name" value="L-Aspartase-like"/>
</dbReference>
<dbReference type="InterPro" id="IPR022313">
    <property type="entry name" value="Phe/His_NH3-lyase_AS"/>
</dbReference>
<dbReference type="InterPro" id="IPR005922">
    <property type="entry name" value="Phe_NH3-lyase"/>
</dbReference>
<dbReference type="InterPro" id="IPR023144">
    <property type="entry name" value="Phe_NH3-lyase_shielding_dom_sf"/>
</dbReference>
<dbReference type="NCBIfam" id="TIGR01226">
    <property type="entry name" value="phe_am_lyase"/>
    <property type="match status" value="1"/>
</dbReference>
<dbReference type="PANTHER" id="PTHR10362">
    <property type="entry name" value="HISTIDINE AMMONIA-LYASE"/>
    <property type="match status" value="1"/>
</dbReference>
<dbReference type="Pfam" id="PF00221">
    <property type="entry name" value="Lyase_aromatic"/>
    <property type="match status" value="1"/>
</dbReference>
<dbReference type="SUPFAM" id="SSF48557">
    <property type="entry name" value="L-aspartase-like"/>
    <property type="match status" value="1"/>
</dbReference>
<dbReference type="PROSITE" id="PS00488">
    <property type="entry name" value="PAL_HISTIDASE"/>
    <property type="match status" value="1"/>
</dbReference>
<comment type="function">
    <text evidence="2">This is a key enzyme of plant metabolism catalyzing the first reaction in the biosynthesis from L-phenylalanine of a wide variety of natural products based on the phenylpropane skeleton.</text>
</comment>
<comment type="catalytic activity">
    <reaction evidence="2">
        <text>L-phenylalanine = (E)-cinnamate + NH4(+)</text>
        <dbReference type="Rhea" id="RHEA:21384"/>
        <dbReference type="ChEBI" id="CHEBI:15669"/>
        <dbReference type="ChEBI" id="CHEBI:28938"/>
        <dbReference type="ChEBI" id="CHEBI:58095"/>
        <dbReference type="EC" id="4.3.1.24"/>
    </reaction>
</comment>
<comment type="pathway">
    <text evidence="5">Phenylpropanoid metabolism; trans-cinnamate biosynthesis; trans-cinnamate from L-phenylalanine: step 1/1.</text>
</comment>
<comment type="subunit">
    <text evidence="2">Homotetramer.</text>
</comment>
<comment type="subcellular location">
    <subcellularLocation>
        <location evidence="5">Cytoplasm</location>
    </subcellularLocation>
</comment>
<comment type="PTM">
    <text evidence="3">Contains an active site 4-methylidene-imidazol-5-one (MIO), which is formed autocatalytically by cyclization and dehydration of residues Ala-Ser-Gly.</text>
</comment>
<comment type="similarity">
    <text evidence="5">Belongs to the PAL/histidase family.</text>
</comment>
<reference key="1">
    <citation type="submission" date="1996-01" db="EMBL/GenBank/DDBJ databases">
        <authorList>
            <person name="Zhang X.H."/>
            <person name="Chiang V.L."/>
        </authorList>
    </citation>
    <scope>NUCLEOTIDE SEQUENCE [GENOMIC DNA]</scope>
    <source>
        <tissue>Needle</tissue>
    </source>
</reference>
<feature type="chain" id="PRO_0000215412" description="Phenylalanine ammonia-lyase">
    <location>
        <begin position="1"/>
        <end position="754"/>
    </location>
</feature>
<feature type="active site" description="Proton donor/acceptor" evidence="3">
    <location>
        <position position="114"/>
    </location>
</feature>
<feature type="binding site" evidence="3">
    <location>
        <position position="263"/>
    </location>
    <ligand>
        <name>(E)-cinnamate</name>
        <dbReference type="ChEBI" id="CHEBI:15669"/>
    </ligand>
</feature>
<feature type="binding site" evidence="3">
    <location>
        <position position="351"/>
    </location>
    <ligand>
        <name>(E)-cinnamate</name>
        <dbReference type="ChEBI" id="CHEBI:15669"/>
    </ligand>
</feature>
<feature type="binding site" evidence="3">
    <location>
        <position position="357"/>
    </location>
    <ligand>
        <name>(E)-cinnamate</name>
        <dbReference type="ChEBI" id="CHEBI:15669"/>
    </ligand>
</feature>
<feature type="binding site" evidence="3">
    <location>
        <position position="387"/>
    </location>
    <ligand>
        <name>(E)-cinnamate</name>
        <dbReference type="ChEBI" id="CHEBI:15669"/>
    </ligand>
</feature>
<feature type="binding site" evidence="1">
    <location>
        <position position="459"/>
    </location>
    <ligand>
        <name>(E)-cinnamate</name>
        <dbReference type="ChEBI" id="CHEBI:15669"/>
    </ligand>
</feature>
<feature type="binding site" evidence="1">
    <location>
        <position position="487"/>
    </location>
    <ligand>
        <name>(E)-cinnamate</name>
        <dbReference type="ChEBI" id="CHEBI:15669"/>
    </ligand>
</feature>
<feature type="binding site" evidence="3">
    <location>
        <position position="490"/>
    </location>
    <ligand>
        <name>(E)-cinnamate</name>
        <dbReference type="ChEBI" id="CHEBI:15669"/>
    </ligand>
</feature>
<feature type="modified residue" description="2,3-didehydroalanine (Ser)" evidence="4">
    <location>
        <position position="207"/>
    </location>
</feature>
<feature type="cross-link" description="5-imidazolinone (Ala-Gly)" evidence="3">
    <location>
        <begin position="206"/>
        <end position="208"/>
    </location>
</feature>
<proteinExistence type="inferred from homology"/>
<sequence>MVAAAEITQANEVQVKSTGLCTDFGSSGSDPLNWVRAAKAMEGSHFEEVKAMVDSYFGAKEISIEGKSLTISDVAAVARRSQVKVKLDAAAAKSRVEESSNWVLTQMTKGTDTYGVTTGFGATSHRRTNQGAELQKELIRFLNAGVLGKCPENVLSEDTTRAAMLVRTNTLLQGYSGVRWDILETVEKLLNAWLTPKLPLRGTITASGDLVPLSYIAGLLTGRPNSRVRSRDGIEMSGAEALKKVGLEKPFELQPKEGLAIVNGTSVGAALASIVCFDANVLALLSEVISAMFCEVMNGKPEFTDPLTHKLKHHPGQMEAAAIMEYVLDGSSYMKHAAKLHEMNPLQKPKQDRYGLRTSPQWLGPQVEIIRSATHMIEREINSVNDNPVIDVARDKALHGGNFQGTPIGVSMDNLRLSISAIGKLMFAQFSELVNDYYNGGLPSNLSGGPNPSLDYGLKGAEIAMASYTSELLYLANPVTSHVQSAEQHNQDVNSLGLVSARKSAEAIDILKLMLSTYLTALCQAVDLRHLEENMLATVKQIVSQVAKKTLSTGLNGELLPGRFCEKDLLQVVDNEHVFSYIDDPCNASYPLTQKLRNILVEHAFKNAEGEKDPNTSIFNKIPVFEAELKAQLEPQVSLARESYDKGTSPLPDRIQECRSYPLYEFVRNQLGTKLLSGTRTISPGEVIEVVYDAISEDKVIVPLFKCLDGWKGTLAHSEINNLPRSPLYNDCYDLSPRMLLLMLLFSDPEFDWS</sequence>
<protein>
    <recommendedName>
        <fullName>Phenylalanine ammonia-lyase</fullName>
        <ecNumber evidence="2">4.3.1.24</ecNumber>
    </recommendedName>
</protein>
<gene>
    <name type="primary">PAL</name>
</gene>
<evidence type="ECO:0000250" key="1">
    <source>
        <dbReference type="UniProtKB" id="P11544"/>
    </source>
</evidence>
<evidence type="ECO:0000250" key="2">
    <source>
        <dbReference type="UniProtKB" id="P24481"/>
    </source>
</evidence>
<evidence type="ECO:0000250" key="3">
    <source>
        <dbReference type="UniProtKB" id="Q68G84"/>
    </source>
</evidence>
<evidence type="ECO:0000255" key="4">
    <source>
        <dbReference type="PROSITE-ProRule" id="PRU10122"/>
    </source>
</evidence>
<evidence type="ECO:0000305" key="5"/>
<organism>
    <name type="scientific">Pinus taeda</name>
    <name type="common">Loblolly pine</name>
    <dbReference type="NCBI Taxonomy" id="3352"/>
    <lineage>
        <taxon>Eukaryota</taxon>
        <taxon>Viridiplantae</taxon>
        <taxon>Streptophyta</taxon>
        <taxon>Embryophyta</taxon>
        <taxon>Tracheophyta</taxon>
        <taxon>Spermatophyta</taxon>
        <taxon>Pinopsida</taxon>
        <taxon>Pinidae</taxon>
        <taxon>Conifers I</taxon>
        <taxon>Pinales</taxon>
        <taxon>Pinaceae</taxon>
        <taxon>Pinus</taxon>
        <taxon>Pinus subgen. Pinus</taxon>
    </lineage>
</organism>